<name>RS19E_PYRAB</name>
<keyword id="KW-0002">3D-structure</keyword>
<keyword id="KW-0687">Ribonucleoprotein</keyword>
<keyword id="KW-0689">Ribosomal protein</keyword>
<sequence>MATVYDVPGDLLVERVAQRLKEIPEIKPPEWAPFVKTGRHKERLPEQEDWWYYRVASILRRVYLDGPVGIERLRTYYGGRKNRGHAPERFYKAGGSIIRKALQQLEAAGFVEKVPGKGRVITPKGRSFLDKIATELKKELEEIIPELKKY</sequence>
<accession>Q9V0G8</accession>
<evidence type="ECO:0000250" key="1"/>
<evidence type="ECO:0000305" key="2"/>
<evidence type="ECO:0007829" key="3">
    <source>
        <dbReference type="PDB" id="2V7F"/>
    </source>
</evidence>
<evidence type="ECO:0007829" key="4">
    <source>
        <dbReference type="PDB" id="7ZHG"/>
    </source>
</evidence>
<protein>
    <recommendedName>
        <fullName evidence="2">Small ribosomal subunit protein eS19</fullName>
    </recommendedName>
    <alternativeName>
        <fullName>30S ribosomal protein S19e</fullName>
    </alternativeName>
</protein>
<dbReference type="EMBL" id="AJ248285">
    <property type="protein sequence ID" value="CAB49735.1"/>
    <property type="molecule type" value="Genomic_DNA"/>
</dbReference>
<dbReference type="EMBL" id="HE613800">
    <property type="protein sequence ID" value="CCE70223.1"/>
    <property type="molecule type" value="Genomic_DNA"/>
</dbReference>
<dbReference type="PIR" id="F75127">
    <property type="entry name" value="F75127"/>
</dbReference>
<dbReference type="RefSeq" id="WP_010867943.1">
    <property type="nucleotide sequence ID" value="NC_000868.1"/>
</dbReference>
<dbReference type="PDB" id="2V7F">
    <property type="method" value="X-ray"/>
    <property type="resolution" value="1.15 A"/>
    <property type="chains" value="A=1-150"/>
</dbReference>
<dbReference type="PDB" id="5JB3">
    <property type="method" value="EM"/>
    <property type="resolution" value="5.34 A"/>
    <property type="chains" value="U=1-150"/>
</dbReference>
<dbReference type="PDB" id="5JBH">
    <property type="method" value="EM"/>
    <property type="resolution" value="5.34 A"/>
    <property type="chains" value="U=1-150"/>
</dbReference>
<dbReference type="PDB" id="6SW9">
    <property type="method" value="EM"/>
    <property type="resolution" value="4.20 A"/>
    <property type="chains" value="U=1-150"/>
</dbReference>
<dbReference type="PDB" id="6SWC">
    <property type="method" value="EM"/>
    <property type="resolution" value="3.30 A"/>
    <property type="chains" value="U=1-150"/>
</dbReference>
<dbReference type="PDB" id="6SWE">
    <property type="method" value="EM"/>
    <property type="resolution" value="3.10 A"/>
    <property type="chains" value="U=1-150"/>
</dbReference>
<dbReference type="PDB" id="7ZAG">
    <property type="method" value="EM"/>
    <property type="resolution" value="2.77 A"/>
    <property type="chains" value="U=1-150"/>
</dbReference>
<dbReference type="PDB" id="7ZAH">
    <property type="method" value="EM"/>
    <property type="resolution" value="2.70 A"/>
    <property type="chains" value="U=1-150"/>
</dbReference>
<dbReference type="PDB" id="7ZAI">
    <property type="method" value="EM"/>
    <property type="resolution" value="2.60 A"/>
    <property type="chains" value="U=1-150"/>
</dbReference>
<dbReference type="PDB" id="7ZHG">
    <property type="method" value="EM"/>
    <property type="resolution" value="2.25 A"/>
    <property type="chains" value="U=1-150"/>
</dbReference>
<dbReference type="PDBsum" id="2V7F"/>
<dbReference type="PDBsum" id="5JB3"/>
<dbReference type="PDBsum" id="5JBH"/>
<dbReference type="PDBsum" id="6SW9"/>
<dbReference type="PDBsum" id="6SWC"/>
<dbReference type="PDBsum" id="6SWE"/>
<dbReference type="PDBsum" id="7ZAG"/>
<dbReference type="PDBsum" id="7ZAH"/>
<dbReference type="PDBsum" id="7ZAI"/>
<dbReference type="PDBsum" id="7ZHG"/>
<dbReference type="EMDB" id="EMD-10320"/>
<dbReference type="EMDB" id="EMD-10322"/>
<dbReference type="EMDB" id="EMD-10324"/>
<dbReference type="EMDB" id="EMD-14579"/>
<dbReference type="EMDB" id="EMD-14580"/>
<dbReference type="EMDB" id="EMD-14581"/>
<dbReference type="EMDB" id="EMD-14731"/>
<dbReference type="EMDB" id="EMD-8148"/>
<dbReference type="EMDB" id="EMD-8149"/>
<dbReference type="SMR" id="Q9V0G8"/>
<dbReference type="STRING" id="272844.PAB1813"/>
<dbReference type="KEGG" id="pab:PAB1813"/>
<dbReference type="PATRIC" id="fig|272844.11.peg.867"/>
<dbReference type="eggNOG" id="arCOG01344">
    <property type="taxonomic scope" value="Archaea"/>
</dbReference>
<dbReference type="HOGENOM" id="CLU_108559_1_0_2"/>
<dbReference type="OrthoDB" id="371836at2157"/>
<dbReference type="PhylomeDB" id="Q9V0G8"/>
<dbReference type="EvolutionaryTrace" id="Q9V0G8"/>
<dbReference type="Proteomes" id="UP000000810">
    <property type="component" value="Chromosome"/>
</dbReference>
<dbReference type="Proteomes" id="UP000009139">
    <property type="component" value="Chromosome"/>
</dbReference>
<dbReference type="GO" id="GO:0022627">
    <property type="term" value="C:cytosolic small ribosomal subunit"/>
    <property type="evidence" value="ECO:0007669"/>
    <property type="project" value="TreeGrafter"/>
</dbReference>
<dbReference type="GO" id="GO:0003723">
    <property type="term" value="F:RNA binding"/>
    <property type="evidence" value="ECO:0007669"/>
    <property type="project" value="TreeGrafter"/>
</dbReference>
<dbReference type="GO" id="GO:0003735">
    <property type="term" value="F:structural constituent of ribosome"/>
    <property type="evidence" value="ECO:0007669"/>
    <property type="project" value="InterPro"/>
</dbReference>
<dbReference type="GO" id="GO:0000028">
    <property type="term" value="P:ribosomal small subunit assembly"/>
    <property type="evidence" value="ECO:0007669"/>
    <property type="project" value="TreeGrafter"/>
</dbReference>
<dbReference type="GO" id="GO:0006412">
    <property type="term" value="P:translation"/>
    <property type="evidence" value="ECO:0007669"/>
    <property type="project" value="UniProtKB-UniRule"/>
</dbReference>
<dbReference type="FunFam" id="1.10.10.10:FF:000449">
    <property type="entry name" value="30S ribosomal protein S19e"/>
    <property type="match status" value="1"/>
</dbReference>
<dbReference type="Gene3D" id="1.10.10.10">
    <property type="entry name" value="Winged helix-like DNA-binding domain superfamily/Winged helix DNA-binding domain"/>
    <property type="match status" value="1"/>
</dbReference>
<dbReference type="HAMAP" id="MF_01474">
    <property type="entry name" value="Ribosomal_eS19"/>
    <property type="match status" value="1"/>
</dbReference>
<dbReference type="InterPro" id="IPR001266">
    <property type="entry name" value="Ribosomal_eS19"/>
</dbReference>
<dbReference type="InterPro" id="IPR027548">
    <property type="entry name" value="Ribosomal_eS19_archaeal"/>
</dbReference>
<dbReference type="InterPro" id="IPR018277">
    <property type="entry name" value="Ribosomal_eS19_CS"/>
</dbReference>
<dbReference type="InterPro" id="IPR036388">
    <property type="entry name" value="WH-like_DNA-bd_sf"/>
</dbReference>
<dbReference type="InterPro" id="IPR036390">
    <property type="entry name" value="WH_DNA-bd_sf"/>
</dbReference>
<dbReference type="NCBIfam" id="NF006811">
    <property type="entry name" value="PRK09333.1"/>
    <property type="match status" value="1"/>
</dbReference>
<dbReference type="PANTHER" id="PTHR11710">
    <property type="entry name" value="40S RIBOSOMAL PROTEIN S19"/>
    <property type="match status" value="1"/>
</dbReference>
<dbReference type="PANTHER" id="PTHR11710:SF0">
    <property type="entry name" value="40S RIBOSOMAL PROTEIN S19"/>
    <property type="match status" value="1"/>
</dbReference>
<dbReference type="Pfam" id="PF01090">
    <property type="entry name" value="Ribosomal_S19e"/>
    <property type="match status" value="1"/>
</dbReference>
<dbReference type="SMART" id="SM01413">
    <property type="entry name" value="Ribosomal_S19e"/>
    <property type="match status" value="1"/>
</dbReference>
<dbReference type="SUPFAM" id="SSF46785">
    <property type="entry name" value="Winged helix' DNA-binding domain"/>
    <property type="match status" value="1"/>
</dbReference>
<dbReference type="PROSITE" id="PS00628">
    <property type="entry name" value="RIBOSOMAL_S19E"/>
    <property type="match status" value="1"/>
</dbReference>
<organism>
    <name type="scientific">Pyrococcus abyssi (strain GE5 / Orsay)</name>
    <dbReference type="NCBI Taxonomy" id="272844"/>
    <lineage>
        <taxon>Archaea</taxon>
        <taxon>Methanobacteriati</taxon>
        <taxon>Methanobacteriota</taxon>
        <taxon>Thermococci</taxon>
        <taxon>Thermococcales</taxon>
        <taxon>Thermococcaceae</taxon>
        <taxon>Pyrococcus</taxon>
    </lineage>
</organism>
<feature type="chain" id="PRO_0000418986" description="Small ribosomal subunit protein eS19">
    <location>
        <begin position="1"/>
        <end position="150"/>
    </location>
</feature>
<feature type="helix" evidence="3">
    <location>
        <begin position="4"/>
        <end position="6"/>
    </location>
</feature>
<feature type="helix" evidence="3">
    <location>
        <begin position="9"/>
        <end position="20"/>
    </location>
</feature>
<feature type="helix" evidence="3">
    <location>
        <begin position="32"/>
        <end position="34"/>
    </location>
</feature>
<feature type="helix" evidence="3">
    <location>
        <begin position="45"/>
        <end position="48"/>
    </location>
</feature>
<feature type="helix" evidence="3">
    <location>
        <begin position="50"/>
        <end position="65"/>
    </location>
</feature>
<feature type="helix" evidence="3">
    <location>
        <begin position="70"/>
        <end position="77"/>
    </location>
</feature>
<feature type="strand" evidence="4">
    <location>
        <begin position="79"/>
        <end position="83"/>
    </location>
</feature>
<feature type="strand" evidence="4">
    <location>
        <begin position="86"/>
        <end position="91"/>
    </location>
</feature>
<feature type="helix" evidence="3">
    <location>
        <begin position="93"/>
        <end position="107"/>
    </location>
</feature>
<feature type="strand" evidence="3">
    <location>
        <begin position="110"/>
        <end position="114"/>
    </location>
</feature>
<feature type="turn" evidence="3">
    <location>
        <begin position="115"/>
        <end position="117"/>
    </location>
</feature>
<feature type="strand" evidence="3">
    <location>
        <begin position="118"/>
        <end position="121"/>
    </location>
</feature>
<feature type="helix" evidence="3">
    <location>
        <begin position="123"/>
        <end position="146"/>
    </location>
</feature>
<gene>
    <name type="primary">rps19e</name>
    <name type="ordered locus">PYRAB08210</name>
    <name type="ORF">PAB1813</name>
</gene>
<reference key="1">
    <citation type="journal article" date="2003" name="Mol. Microbiol.">
        <title>An integrated analysis of the genome of the hyperthermophilic archaeon Pyrococcus abyssi.</title>
        <authorList>
            <person name="Cohen G.N."/>
            <person name="Barbe V."/>
            <person name="Flament D."/>
            <person name="Galperin M."/>
            <person name="Heilig R."/>
            <person name="Lecompte O."/>
            <person name="Poch O."/>
            <person name="Prieur D."/>
            <person name="Querellou J."/>
            <person name="Ripp R."/>
            <person name="Thierry J.-C."/>
            <person name="Van der Oost J."/>
            <person name="Weissenbach J."/>
            <person name="Zivanovic Y."/>
            <person name="Forterre P."/>
        </authorList>
    </citation>
    <scope>NUCLEOTIDE SEQUENCE [LARGE SCALE GENOMIC DNA]</scope>
    <source>
        <strain>GE5 / Orsay</strain>
    </source>
</reference>
<reference key="2">
    <citation type="journal article" date="2012" name="Curr. Microbiol.">
        <title>Re-annotation of two hyperthermophilic archaea Pyrococcus abyssi GE5 and Pyrococcus furiosus DSM 3638.</title>
        <authorList>
            <person name="Gao J."/>
            <person name="Wang J."/>
        </authorList>
    </citation>
    <scope>GENOME REANNOTATION</scope>
    <source>
        <strain>GE5 / Orsay</strain>
    </source>
</reference>
<reference key="3">
    <citation type="journal article" date="2007" name="Nucleic Acids Res.">
        <title>Molecular basis of Diamond-Blackfan anemia: structure and function analysis of RPS19.</title>
        <authorList>
            <person name="Gregory L.A."/>
            <person name="Aguissa-Toure A.H."/>
            <person name="Pinaud N."/>
            <person name="Legrand P."/>
            <person name="Gleizes P.E."/>
            <person name="Fribourg S."/>
        </authorList>
    </citation>
    <scope>X-RAY CRYSTALLOGRAPHY (1.15 ANGSTROMS)</scope>
</reference>
<proteinExistence type="evidence at protein level"/>
<comment type="function">
    <text evidence="1">May be involved in maturation of the 30S ribosomal subunit.</text>
</comment>
<comment type="subunit">
    <text evidence="1">Part of the 30S ribosomal subunit.</text>
</comment>
<comment type="similarity">
    <text evidence="2">Belongs to the eukaryotic ribosomal protein eS19 family.</text>
</comment>